<organism>
    <name type="scientific">Helicobacter pylori (strain Shi470)</name>
    <dbReference type="NCBI Taxonomy" id="512562"/>
    <lineage>
        <taxon>Bacteria</taxon>
        <taxon>Pseudomonadati</taxon>
        <taxon>Campylobacterota</taxon>
        <taxon>Epsilonproteobacteria</taxon>
        <taxon>Campylobacterales</taxon>
        <taxon>Helicobacteraceae</taxon>
        <taxon>Helicobacter</taxon>
    </lineage>
</organism>
<gene>
    <name evidence="1" type="primary">rsmH</name>
    <name type="synonym">mraW</name>
    <name type="ordered locus">HPSH_03320</name>
</gene>
<protein>
    <recommendedName>
        <fullName evidence="1">Ribosomal RNA small subunit methyltransferase H</fullName>
        <ecNumber evidence="1">2.1.1.199</ecNumber>
    </recommendedName>
    <alternativeName>
        <fullName evidence="1">16S rRNA m(4)C1402 methyltransferase</fullName>
    </alternativeName>
    <alternativeName>
        <fullName evidence="1">rRNA (cytosine-N(4)-)-methyltransferase RsmH</fullName>
    </alternativeName>
</protein>
<feature type="chain" id="PRO_1000134763" description="Ribosomal RNA small subunit methyltransferase H">
    <location>
        <begin position="1"/>
        <end position="308"/>
    </location>
</feature>
<feature type="binding site" evidence="1">
    <location>
        <begin position="36"/>
        <end position="38"/>
    </location>
    <ligand>
        <name>S-adenosyl-L-methionine</name>
        <dbReference type="ChEBI" id="CHEBI:59789"/>
    </ligand>
</feature>
<feature type="binding site" evidence="1">
    <location>
        <position position="55"/>
    </location>
    <ligand>
        <name>S-adenosyl-L-methionine</name>
        <dbReference type="ChEBI" id="CHEBI:59789"/>
    </ligand>
</feature>
<feature type="binding site" evidence="1">
    <location>
        <position position="86"/>
    </location>
    <ligand>
        <name>S-adenosyl-L-methionine</name>
        <dbReference type="ChEBI" id="CHEBI:59789"/>
    </ligand>
</feature>
<feature type="binding site" evidence="1">
    <location>
        <position position="103"/>
    </location>
    <ligand>
        <name>S-adenosyl-L-methionine</name>
        <dbReference type="ChEBI" id="CHEBI:59789"/>
    </ligand>
</feature>
<feature type="binding site" evidence="1">
    <location>
        <position position="110"/>
    </location>
    <ligand>
        <name>S-adenosyl-L-methionine</name>
        <dbReference type="ChEBI" id="CHEBI:59789"/>
    </ligand>
</feature>
<name>RSMH_HELPS</name>
<keyword id="KW-0963">Cytoplasm</keyword>
<keyword id="KW-0489">Methyltransferase</keyword>
<keyword id="KW-0698">rRNA processing</keyword>
<keyword id="KW-0949">S-adenosyl-L-methionine</keyword>
<keyword id="KW-0808">Transferase</keyword>
<reference key="1">
    <citation type="submission" date="2008-05" db="EMBL/GenBank/DDBJ databases">
        <title>Genome sequence of Helicobacter pylori from the remote Amazon: traces of Asian ancestry of the first Americans.</title>
        <authorList>
            <person name="Kersulyte D."/>
            <person name="Kalia A."/>
            <person name="Gilman R.H."/>
            <person name="Berg D.E."/>
        </authorList>
    </citation>
    <scope>NUCLEOTIDE SEQUENCE [LARGE SCALE GENOMIC DNA]</scope>
    <source>
        <strain>Shi470</strain>
    </source>
</reference>
<proteinExistence type="inferred from homology"/>
<comment type="function">
    <text evidence="1">Specifically methylates the N4 position of cytidine in position 1402 (C1402) of 16S rRNA.</text>
</comment>
<comment type="catalytic activity">
    <reaction evidence="1">
        <text>cytidine(1402) in 16S rRNA + S-adenosyl-L-methionine = N(4)-methylcytidine(1402) in 16S rRNA + S-adenosyl-L-homocysteine + H(+)</text>
        <dbReference type="Rhea" id="RHEA:42928"/>
        <dbReference type="Rhea" id="RHEA-COMP:10286"/>
        <dbReference type="Rhea" id="RHEA-COMP:10287"/>
        <dbReference type="ChEBI" id="CHEBI:15378"/>
        <dbReference type="ChEBI" id="CHEBI:57856"/>
        <dbReference type="ChEBI" id="CHEBI:59789"/>
        <dbReference type="ChEBI" id="CHEBI:74506"/>
        <dbReference type="ChEBI" id="CHEBI:82748"/>
        <dbReference type="EC" id="2.1.1.199"/>
    </reaction>
</comment>
<comment type="subcellular location">
    <subcellularLocation>
        <location evidence="1">Cytoplasm</location>
    </subcellularLocation>
</comment>
<comment type="similarity">
    <text evidence="1">Belongs to the methyltransferase superfamily. RsmH family.</text>
</comment>
<accession>B2UTC1</accession>
<evidence type="ECO:0000255" key="1">
    <source>
        <dbReference type="HAMAP-Rule" id="MF_01007"/>
    </source>
</evidence>
<dbReference type="EC" id="2.1.1.199" evidence="1"/>
<dbReference type="EMBL" id="CP001072">
    <property type="protein sequence ID" value="ACD48103.1"/>
    <property type="molecule type" value="Genomic_DNA"/>
</dbReference>
<dbReference type="RefSeq" id="WP_001155559.1">
    <property type="nucleotide sequence ID" value="NC_010698.2"/>
</dbReference>
<dbReference type="SMR" id="B2UTC1"/>
<dbReference type="KEGG" id="hps:HPSH_03320"/>
<dbReference type="HOGENOM" id="CLU_038422_3_0_7"/>
<dbReference type="GO" id="GO:0005737">
    <property type="term" value="C:cytoplasm"/>
    <property type="evidence" value="ECO:0007669"/>
    <property type="project" value="UniProtKB-SubCell"/>
</dbReference>
<dbReference type="GO" id="GO:0071424">
    <property type="term" value="F:rRNA (cytosine-N4-)-methyltransferase activity"/>
    <property type="evidence" value="ECO:0007669"/>
    <property type="project" value="UniProtKB-UniRule"/>
</dbReference>
<dbReference type="GO" id="GO:0070475">
    <property type="term" value="P:rRNA base methylation"/>
    <property type="evidence" value="ECO:0007669"/>
    <property type="project" value="UniProtKB-UniRule"/>
</dbReference>
<dbReference type="FunFam" id="1.10.150.170:FF:000008">
    <property type="entry name" value="Ribosomal RNA small subunit methyltransferase H"/>
    <property type="match status" value="1"/>
</dbReference>
<dbReference type="Gene3D" id="1.10.150.170">
    <property type="entry name" value="Putative methyltransferase TM0872, insert domain"/>
    <property type="match status" value="1"/>
</dbReference>
<dbReference type="Gene3D" id="3.40.50.150">
    <property type="entry name" value="Vaccinia Virus protein VP39"/>
    <property type="match status" value="1"/>
</dbReference>
<dbReference type="HAMAP" id="MF_01007">
    <property type="entry name" value="16SrRNA_methyltr_H"/>
    <property type="match status" value="1"/>
</dbReference>
<dbReference type="InterPro" id="IPR002903">
    <property type="entry name" value="RsmH"/>
</dbReference>
<dbReference type="InterPro" id="IPR023397">
    <property type="entry name" value="SAM-dep_MeTrfase_MraW_recog"/>
</dbReference>
<dbReference type="InterPro" id="IPR029063">
    <property type="entry name" value="SAM-dependent_MTases_sf"/>
</dbReference>
<dbReference type="NCBIfam" id="TIGR00006">
    <property type="entry name" value="16S rRNA (cytosine(1402)-N(4))-methyltransferase RsmH"/>
    <property type="match status" value="1"/>
</dbReference>
<dbReference type="PANTHER" id="PTHR11265:SF0">
    <property type="entry name" value="12S RRNA N4-METHYLCYTIDINE METHYLTRANSFERASE"/>
    <property type="match status" value="1"/>
</dbReference>
<dbReference type="PANTHER" id="PTHR11265">
    <property type="entry name" value="S-ADENOSYL-METHYLTRANSFERASE MRAW"/>
    <property type="match status" value="1"/>
</dbReference>
<dbReference type="Pfam" id="PF01795">
    <property type="entry name" value="Methyltransf_5"/>
    <property type="match status" value="1"/>
</dbReference>
<dbReference type="PIRSF" id="PIRSF004486">
    <property type="entry name" value="MraW"/>
    <property type="match status" value="1"/>
</dbReference>
<dbReference type="SUPFAM" id="SSF81799">
    <property type="entry name" value="Putative methyltransferase TM0872, insert domain"/>
    <property type="match status" value="1"/>
</dbReference>
<dbReference type="SUPFAM" id="SSF53335">
    <property type="entry name" value="S-adenosyl-L-methionine-dependent methyltransferases"/>
    <property type="match status" value="1"/>
</dbReference>
<sequence>MQEIESLHQSVLLQEVLQAFAPLEEGVLIDCTLGLGGHSKAILSQKPHLKLIGIDKDKFAQEIAKERLKAFEGRYNLLSGGFAKRFKEALEMHDKEIKGVLVDLGVSSLQLDDDSRGFNFHSHALDMRMDLESDLNAQKVINSYPVVALEKIFKDYGEIKEYKKIAHKIAERRAKKPFKDAKDLSDFLSSLSKNKKIHPATLVFQAVRIEVNSELEELKEFLQCARNLKEAILCVISFHSLEDALVKNAFKDYAKNCICDPSSFKCTCSNNHALGEILTKKPITPSPEEIKNNRRSRSAKMRVFQFKP</sequence>